<name>ARCA_MYCTO</name>
<accession>P9WQ04</accession>
<accession>L0T5J1</accession>
<accession>O05585</accession>
<accession>P63551</accession>
<reference key="1">
    <citation type="journal article" date="2002" name="J. Bacteriol.">
        <title>Whole-genome comparison of Mycobacterium tuberculosis clinical and laboratory strains.</title>
        <authorList>
            <person name="Fleischmann R.D."/>
            <person name="Alland D."/>
            <person name="Eisen J.A."/>
            <person name="Carpenter L."/>
            <person name="White O."/>
            <person name="Peterson J.D."/>
            <person name="DeBoy R.T."/>
            <person name="Dodson R.J."/>
            <person name="Gwinn M.L."/>
            <person name="Haft D.H."/>
            <person name="Hickey E.K."/>
            <person name="Kolonay J.F."/>
            <person name="Nelson W.C."/>
            <person name="Umayam L.A."/>
            <person name="Ermolaeva M.D."/>
            <person name="Salzberg S.L."/>
            <person name="Delcher A."/>
            <person name="Utterback T.R."/>
            <person name="Weidman J.F."/>
            <person name="Khouri H.M."/>
            <person name="Gill J."/>
            <person name="Mikula A."/>
            <person name="Bishai W."/>
            <person name="Jacobs W.R. Jr."/>
            <person name="Venter J.C."/>
            <person name="Fraser C.M."/>
        </authorList>
    </citation>
    <scope>NUCLEOTIDE SEQUENCE [LARGE SCALE GENOMIC DNA]</scope>
    <source>
        <strain>CDC 1551 / Oshkosh</strain>
    </source>
</reference>
<proteinExistence type="inferred from homology"/>
<evidence type="ECO:0000250" key="1"/>
<evidence type="ECO:0000305" key="2"/>
<protein>
    <recommendedName>
        <fullName>Arginine deiminase</fullName>
        <shortName>ADI</shortName>
        <ecNumber>3.5.3.6</ecNumber>
    </recommendedName>
    <alternativeName>
        <fullName>Arginine dihydrolase</fullName>
        <shortName>AD</shortName>
    </alternativeName>
</protein>
<comment type="catalytic activity">
    <reaction>
        <text>L-arginine + H2O = L-citrulline + NH4(+)</text>
        <dbReference type="Rhea" id="RHEA:19597"/>
        <dbReference type="ChEBI" id="CHEBI:15377"/>
        <dbReference type="ChEBI" id="CHEBI:28938"/>
        <dbReference type="ChEBI" id="CHEBI:32682"/>
        <dbReference type="ChEBI" id="CHEBI:57743"/>
        <dbReference type="EC" id="3.5.3.6"/>
    </reaction>
</comment>
<comment type="pathway">
    <text>Amino-acid degradation; L-arginine degradation via ADI pathway; carbamoyl phosphate from L-arginine: step 1/2.</text>
</comment>
<comment type="subcellular location">
    <subcellularLocation>
        <location evidence="2">Cytoplasm</location>
    </subcellularLocation>
</comment>
<comment type="similarity">
    <text evidence="2">Belongs to the arginine deiminase family.</text>
</comment>
<organism>
    <name type="scientific">Mycobacterium tuberculosis (strain CDC 1551 / Oshkosh)</name>
    <dbReference type="NCBI Taxonomy" id="83331"/>
    <lineage>
        <taxon>Bacteria</taxon>
        <taxon>Bacillati</taxon>
        <taxon>Actinomycetota</taxon>
        <taxon>Actinomycetes</taxon>
        <taxon>Mycobacteriales</taxon>
        <taxon>Mycobacteriaceae</taxon>
        <taxon>Mycobacterium</taxon>
        <taxon>Mycobacterium tuberculosis complex</taxon>
    </lineage>
</organism>
<feature type="chain" id="PRO_0000426860" description="Arginine deiminase">
    <location>
        <begin position="1"/>
        <end position="402"/>
    </location>
</feature>
<feature type="active site" description="Amidino-cysteine intermediate" evidence="1">
    <location>
        <position position="392"/>
    </location>
</feature>
<sequence length="402" mass="43089">MGVELGSNSEVGALRVVILHRPGAELRRLTPRNTDQLLFDGLPWVSRAQDEHDEFAELLASRGAEVLLLSDLLTEALHHSGAARMQGIAAAVDAPRLGLPLAQELSAYLRSLDPGRLAHVLTAGMTFNELPSDTRTDVSLVLRMHHGGDFVIEPLPNLVFTRDSSIWIGPRVVIPSLALRARVREASLTDLIYAHHPRFTGVRRAYESRTAPVEGGDVLLLAPGVVAVGVGERTTPAGAEALARSLFDDDLAHTVLAVPIAQQRAQMHLDTVCTMVDTDTMVMYANVVDTLEAFTIQRTPDGVTIGDAAPFAEAAAKAMGIDKLRVIHTGMDPVVAEREQWDDGNNTLALAPGVVVAYERNVQTNARLQDAGIEVLTIAGSELGTGRGGPRCMSCPAARDPL</sequence>
<keyword id="KW-0056">Arginine metabolism</keyword>
<keyword id="KW-0963">Cytoplasm</keyword>
<keyword id="KW-0378">Hydrolase</keyword>
<keyword id="KW-1185">Reference proteome</keyword>
<dbReference type="EC" id="3.5.3.6"/>
<dbReference type="EMBL" id="AE000516">
    <property type="protein sequence ID" value="AAK45280.1"/>
    <property type="molecule type" value="Genomic_DNA"/>
</dbReference>
<dbReference type="PIR" id="D70602">
    <property type="entry name" value="D70602"/>
</dbReference>
<dbReference type="RefSeq" id="WP_003405169.1">
    <property type="nucleotide sequence ID" value="NZ_KK341227.1"/>
</dbReference>
<dbReference type="SMR" id="P9WQ04"/>
<dbReference type="GeneID" id="45424973"/>
<dbReference type="KEGG" id="mtc:MT1030"/>
<dbReference type="PATRIC" id="fig|83331.31.peg.1105"/>
<dbReference type="HOGENOM" id="CLU_052662_0_1_11"/>
<dbReference type="UniPathway" id="UPA00254">
    <property type="reaction ID" value="UER00364"/>
</dbReference>
<dbReference type="Proteomes" id="UP000001020">
    <property type="component" value="Chromosome"/>
</dbReference>
<dbReference type="GO" id="GO:0005737">
    <property type="term" value="C:cytoplasm"/>
    <property type="evidence" value="ECO:0007669"/>
    <property type="project" value="UniProtKB-SubCell"/>
</dbReference>
<dbReference type="GO" id="GO:0016990">
    <property type="term" value="F:arginine deiminase activity"/>
    <property type="evidence" value="ECO:0007669"/>
    <property type="project" value="UniProtKB-UniRule"/>
</dbReference>
<dbReference type="GO" id="GO:0019547">
    <property type="term" value="P:arginine catabolic process to ornithine"/>
    <property type="evidence" value="ECO:0007669"/>
    <property type="project" value="UniProtKB-UniRule"/>
</dbReference>
<dbReference type="GO" id="GO:0019546">
    <property type="term" value="P:arginine deiminase pathway"/>
    <property type="evidence" value="ECO:0007669"/>
    <property type="project" value="TreeGrafter"/>
</dbReference>
<dbReference type="FunFam" id="1.10.3930.10:FF:000004">
    <property type="entry name" value="Arginine deiminase"/>
    <property type="match status" value="1"/>
</dbReference>
<dbReference type="Gene3D" id="1.10.3930.10">
    <property type="entry name" value="Arginine deiminase"/>
    <property type="match status" value="1"/>
</dbReference>
<dbReference type="Gene3D" id="3.75.10.10">
    <property type="entry name" value="L-arginine/glycine Amidinotransferase, Chain A"/>
    <property type="match status" value="1"/>
</dbReference>
<dbReference type="HAMAP" id="MF_00242">
    <property type="entry name" value="Arg_deiminase"/>
    <property type="match status" value="1"/>
</dbReference>
<dbReference type="InterPro" id="IPR003876">
    <property type="entry name" value="Arg_deiminase"/>
</dbReference>
<dbReference type="NCBIfam" id="TIGR01078">
    <property type="entry name" value="arcA"/>
    <property type="match status" value="1"/>
</dbReference>
<dbReference type="NCBIfam" id="NF002381">
    <property type="entry name" value="PRK01388.1"/>
    <property type="match status" value="1"/>
</dbReference>
<dbReference type="PANTHER" id="PTHR47271">
    <property type="entry name" value="ARGININE DEIMINASE"/>
    <property type="match status" value="1"/>
</dbReference>
<dbReference type="PANTHER" id="PTHR47271:SF2">
    <property type="entry name" value="ARGININE DEIMINASE"/>
    <property type="match status" value="1"/>
</dbReference>
<dbReference type="Pfam" id="PF02274">
    <property type="entry name" value="ADI"/>
    <property type="match status" value="1"/>
</dbReference>
<dbReference type="PIRSF" id="PIRSF006356">
    <property type="entry name" value="Arg_deiminase"/>
    <property type="match status" value="1"/>
</dbReference>
<dbReference type="PRINTS" id="PR01466">
    <property type="entry name" value="ARGDEIMINASE"/>
</dbReference>
<dbReference type="SUPFAM" id="SSF55909">
    <property type="entry name" value="Pentein"/>
    <property type="match status" value="1"/>
</dbReference>
<gene>
    <name type="primary">arcA</name>
    <name type="ordered locus">MT1030</name>
</gene>